<name>TRUA_THEPX</name>
<dbReference type="EC" id="5.4.99.12" evidence="1"/>
<dbReference type="EMBL" id="CP000923">
    <property type="protein sequence ID" value="ABY92202.1"/>
    <property type="molecule type" value="Genomic_DNA"/>
</dbReference>
<dbReference type="RefSeq" id="WP_003868592.1">
    <property type="nucleotide sequence ID" value="NC_010320.1"/>
</dbReference>
<dbReference type="SMR" id="B0K5S6"/>
<dbReference type="KEGG" id="tex:Teth514_0900"/>
<dbReference type="HOGENOM" id="CLU_014673_0_1_9"/>
<dbReference type="Proteomes" id="UP000002155">
    <property type="component" value="Chromosome"/>
</dbReference>
<dbReference type="GO" id="GO:0003723">
    <property type="term" value="F:RNA binding"/>
    <property type="evidence" value="ECO:0007669"/>
    <property type="project" value="InterPro"/>
</dbReference>
<dbReference type="GO" id="GO:0160147">
    <property type="term" value="F:tRNA pseudouridine(38-40) synthase activity"/>
    <property type="evidence" value="ECO:0007669"/>
    <property type="project" value="UniProtKB-EC"/>
</dbReference>
<dbReference type="GO" id="GO:0031119">
    <property type="term" value="P:tRNA pseudouridine synthesis"/>
    <property type="evidence" value="ECO:0007669"/>
    <property type="project" value="UniProtKB-UniRule"/>
</dbReference>
<dbReference type="CDD" id="cd02570">
    <property type="entry name" value="PseudoU_synth_EcTruA"/>
    <property type="match status" value="1"/>
</dbReference>
<dbReference type="FunFam" id="3.30.70.580:FF:000001">
    <property type="entry name" value="tRNA pseudouridine synthase A"/>
    <property type="match status" value="1"/>
</dbReference>
<dbReference type="Gene3D" id="3.30.70.660">
    <property type="entry name" value="Pseudouridine synthase I, catalytic domain, C-terminal subdomain"/>
    <property type="match status" value="1"/>
</dbReference>
<dbReference type="Gene3D" id="3.30.70.580">
    <property type="entry name" value="Pseudouridine synthase I, catalytic domain, N-terminal subdomain"/>
    <property type="match status" value="1"/>
</dbReference>
<dbReference type="HAMAP" id="MF_00171">
    <property type="entry name" value="TruA"/>
    <property type="match status" value="1"/>
</dbReference>
<dbReference type="InterPro" id="IPR020103">
    <property type="entry name" value="PsdUridine_synth_cat_dom_sf"/>
</dbReference>
<dbReference type="InterPro" id="IPR001406">
    <property type="entry name" value="PsdUridine_synth_TruA"/>
</dbReference>
<dbReference type="InterPro" id="IPR020097">
    <property type="entry name" value="PsdUridine_synth_TruA_a/b_dom"/>
</dbReference>
<dbReference type="InterPro" id="IPR020095">
    <property type="entry name" value="PsdUridine_synth_TruA_C"/>
</dbReference>
<dbReference type="InterPro" id="IPR020094">
    <property type="entry name" value="TruA/RsuA/RluB/E/F_N"/>
</dbReference>
<dbReference type="NCBIfam" id="TIGR00071">
    <property type="entry name" value="hisT_truA"/>
    <property type="match status" value="1"/>
</dbReference>
<dbReference type="PANTHER" id="PTHR11142">
    <property type="entry name" value="PSEUDOURIDYLATE SYNTHASE"/>
    <property type="match status" value="1"/>
</dbReference>
<dbReference type="PANTHER" id="PTHR11142:SF0">
    <property type="entry name" value="TRNA PSEUDOURIDINE SYNTHASE-LIKE 1"/>
    <property type="match status" value="1"/>
</dbReference>
<dbReference type="Pfam" id="PF01416">
    <property type="entry name" value="PseudoU_synth_1"/>
    <property type="match status" value="2"/>
</dbReference>
<dbReference type="PIRSF" id="PIRSF001430">
    <property type="entry name" value="tRNA_psdUrid_synth"/>
    <property type="match status" value="1"/>
</dbReference>
<dbReference type="SUPFAM" id="SSF55120">
    <property type="entry name" value="Pseudouridine synthase"/>
    <property type="match status" value="1"/>
</dbReference>
<accession>B0K5S6</accession>
<proteinExistence type="inferred from homology"/>
<evidence type="ECO:0000255" key="1">
    <source>
        <dbReference type="HAMAP-Rule" id="MF_00171"/>
    </source>
</evidence>
<keyword id="KW-0413">Isomerase</keyword>
<keyword id="KW-0819">tRNA processing</keyword>
<feature type="chain" id="PRO_1000097799" description="tRNA pseudouridine synthase A">
    <location>
        <begin position="1"/>
        <end position="244"/>
    </location>
</feature>
<feature type="active site" description="Nucleophile" evidence="1">
    <location>
        <position position="52"/>
    </location>
</feature>
<feature type="binding site" evidence="1">
    <location>
        <position position="110"/>
    </location>
    <ligand>
        <name>substrate</name>
    </ligand>
</feature>
<comment type="function">
    <text evidence="1">Formation of pseudouridine at positions 38, 39 and 40 in the anticodon stem and loop of transfer RNAs.</text>
</comment>
<comment type="catalytic activity">
    <reaction evidence="1">
        <text>uridine(38/39/40) in tRNA = pseudouridine(38/39/40) in tRNA</text>
        <dbReference type="Rhea" id="RHEA:22376"/>
        <dbReference type="Rhea" id="RHEA-COMP:10085"/>
        <dbReference type="Rhea" id="RHEA-COMP:10087"/>
        <dbReference type="ChEBI" id="CHEBI:65314"/>
        <dbReference type="ChEBI" id="CHEBI:65315"/>
        <dbReference type="EC" id="5.4.99.12"/>
    </reaction>
</comment>
<comment type="subunit">
    <text evidence="1">Homodimer.</text>
</comment>
<comment type="similarity">
    <text evidence="1">Belongs to the tRNA pseudouridine synthase TruA family.</text>
</comment>
<reference key="1">
    <citation type="submission" date="2008-01" db="EMBL/GenBank/DDBJ databases">
        <title>Complete sequence of Thermoanaerobacter sp. X514.</title>
        <authorList>
            <consortium name="US DOE Joint Genome Institute"/>
            <person name="Copeland A."/>
            <person name="Lucas S."/>
            <person name="Lapidus A."/>
            <person name="Barry K."/>
            <person name="Glavina del Rio T."/>
            <person name="Dalin E."/>
            <person name="Tice H."/>
            <person name="Pitluck S."/>
            <person name="Bruce D."/>
            <person name="Goodwin L."/>
            <person name="Saunders E."/>
            <person name="Brettin T."/>
            <person name="Detter J.C."/>
            <person name="Han C."/>
            <person name="Schmutz J."/>
            <person name="Larimer F."/>
            <person name="Land M."/>
            <person name="Hauser L."/>
            <person name="Kyrpides N."/>
            <person name="Kim E."/>
            <person name="Hemme C."/>
            <person name="Fields M.W."/>
            <person name="He Z."/>
            <person name="Zhou J."/>
            <person name="Richardson P."/>
        </authorList>
    </citation>
    <scope>NUCLEOTIDE SEQUENCE [LARGE SCALE GENOMIC DNA]</scope>
    <source>
        <strain>X514</strain>
    </source>
</reference>
<gene>
    <name evidence="1" type="primary">truA</name>
    <name type="ordered locus">Teth514_0900</name>
</gene>
<organism>
    <name type="scientific">Thermoanaerobacter sp. (strain X514)</name>
    <dbReference type="NCBI Taxonomy" id="399726"/>
    <lineage>
        <taxon>Bacteria</taxon>
        <taxon>Bacillati</taxon>
        <taxon>Bacillota</taxon>
        <taxon>Clostridia</taxon>
        <taxon>Thermoanaerobacterales</taxon>
        <taxon>Thermoanaerobacteraceae</taxon>
        <taxon>Thermoanaerobacter</taxon>
    </lineage>
</organism>
<protein>
    <recommendedName>
        <fullName evidence="1">tRNA pseudouridine synthase A</fullName>
        <ecNumber evidence="1">5.4.99.12</ecNumber>
    </recommendedName>
    <alternativeName>
        <fullName evidence="1">tRNA pseudouridine(38-40) synthase</fullName>
    </alternativeName>
    <alternativeName>
        <fullName evidence="1">tRNA pseudouridylate synthase I</fullName>
    </alternativeName>
    <alternativeName>
        <fullName evidence="1">tRNA-uridine isomerase I</fullName>
    </alternativeName>
</protein>
<sequence>MRNVMIVVEYDGTNYHGWQYQKNAVTVQEVLQKAIKKVTGEEVNLIGASRTDTGVHALYQVANFKTNTKIPAEKLPYALNSVLPDDIVVVQAKDVEDSFHARYSAKRKRYKYIILNRKFQMPTMRNYCWHISYPLNIEEMKKAASYLIGTHDFSAFKASGSSKTSTIRTVYDLTIEKNEDFINIEIEANGFLYNMVRIIVGTLSYVGLGKIKEDEVYDILKSKDRTKAGITAPPQGLYLIKIIY</sequence>